<proteinExistence type="inferred from homology"/>
<feature type="chain" id="PRO_0000263499" description="Elongation factor G">
    <location>
        <begin position="1"/>
        <end position="715"/>
    </location>
</feature>
<feature type="domain" description="tr-type G">
    <location>
        <begin position="12"/>
        <end position="309"/>
    </location>
</feature>
<feature type="binding site" evidence="1">
    <location>
        <begin position="21"/>
        <end position="28"/>
    </location>
    <ligand>
        <name>GTP</name>
        <dbReference type="ChEBI" id="CHEBI:37565"/>
    </ligand>
</feature>
<feature type="binding site" evidence="1">
    <location>
        <begin position="108"/>
        <end position="112"/>
    </location>
    <ligand>
        <name>GTP</name>
        <dbReference type="ChEBI" id="CHEBI:37565"/>
    </ligand>
</feature>
<feature type="binding site" evidence="1">
    <location>
        <begin position="162"/>
        <end position="165"/>
    </location>
    <ligand>
        <name>GTP</name>
        <dbReference type="ChEBI" id="CHEBI:37565"/>
    </ligand>
</feature>
<comment type="function">
    <text evidence="1">Catalyzes the GTP-dependent ribosomal translocation step during translation elongation. During this step, the ribosome changes from the pre-translocational (PRE) to the post-translocational (POST) state as the newly formed A-site-bound peptidyl-tRNA and P-site-bound deacylated tRNA move to the P and E sites, respectively. Catalyzes the coordinated movement of the two tRNA molecules, the mRNA and conformational changes in the ribosome.</text>
</comment>
<comment type="subcellular location">
    <subcellularLocation>
        <location evidence="1">Cytoplasm</location>
    </subcellularLocation>
</comment>
<comment type="similarity">
    <text evidence="1">Belongs to the TRAFAC class translation factor GTPase superfamily. Classic translation factor GTPase family. EF-G/EF-2 subfamily.</text>
</comment>
<organism>
    <name type="scientific">Rubrobacter xylanophilus (strain DSM 9941 / JCM 11954 / NBRC 16129 / PRD-1)</name>
    <dbReference type="NCBI Taxonomy" id="266117"/>
    <lineage>
        <taxon>Bacteria</taxon>
        <taxon>Bacillati</taxon>
        <taxon>Actinomycetota</taxon>
        <taxon>Rubrobacteria</taxon>
        <taxon>Rubrobacterales</taxon>
        <taxon>Rubrobacteraceae</taxon>
        <taxon>Rubrobacter</taxon>
    </lineage>
</organism>
<sequence length="715" mass="79416">MAVQVAKKTPLRRVRNIGIMAHIDAGKTTTTERILLYTGLTHKLGEVHDGNAVMDWMAQERERGITITSAATTVFWGGIEGSAKNGKKDSQEGRHSRIPEQYRINIIDTPGHVDFTVEVERSLRVLDGAIALFDSVAGVEPQSETVWRQADKYRVPRIAFVNKMDRIGADFYHAVETMRQRLGANPVPVQLPIGAEADFVGIVDLVEMKAIIYKDDLGAEWDETEIPEELRERAEEYRERLIEAAAEHDEEVMVAYLEGEEIEPDRIRAALRKATLELQITPVFVGSAFKNKGIQPLLDGVIDYLPSPLDVPPVRGKTLDGEEASREPDEEAPLAALAFKVQADPHVGKLTYIRVYSGTLKAGSYVMNTTKGVRERVGRLLQMHANTREQRDEVYAGELVAAVGLSNTSTGDTLVAVDDPHPIVLEQMVFPEPVIDQAIEPKTKADQEKLSQALQRLAEEDPTFRVRTDEETGQTVIAGMGELHLEIILDRLTREFKVDANIGKPQVAYRETIRRRVEGVEGRFVRQTGGRGQYGHAIINMEPHEGGYEFEDRIVGGVIPRDYIPAVDKGIREALESGVLAGYPVVDVKVELVDGSYHEVDSSEMAFQIAGSMAAKEALKRARPVLLEPIMAVEVTVPEEFMGDVMGDLSSRRGQIQGMDSRGNSQVIRAMVPLAEMFGYATSLRSRTQGRATFTMQFDHYAEVPQNIAEKIAER</sequence>
<gene>
    <name evidence="1" type="primary">fusA</name>
    <name type="ordered locus">Rxyl_2158</name>
</gene>
<dbReference type="EMBL" id="CP000386">
    <property type="protein sequence ID" value="ABG05102.1"/>
    <property type="molecule type" value="Genomic_DNA"/>
</dbReference>
<dbReference type="RefSeq" id="WP_011565117.1">
    <property type="nucleotide sequence ID" value="NC_008148.1"/>
</dbReference>
<dbReference type="SMR" id="Q1AU26"/>
<dbReference type="STRING" id="266117.Rxyl_2158"/>
<dbReference type="KEGG" id="rxy:Rxyl_2158"/>
<dbReference type="eggNOG" id="COG0480">
    <property type="taxonomic scope" value="Bacteria"/>
</dbReference>
<dbReference type="HOGENOM" id="CLU_002794_4_1_11"/>
<dbReference type="OrthoDB" id="9801472at2"/>
<dbReference type="PhylomeDB" id="Q1AU26"/>
<dbReference type="Proteomes" id="UP000006637">
    <property type="component" value="Chromosome"/>
</dbReference>
<dbReference type="GO" id="GO:0005737">
    <property type="term" value="C:cytoplasm"/>
    <property type="evidence" value="ECO:0007669"/>
    <property type="project" value="UniProtKB-SubCell"/>
</dbReference>
<dbReference type="GO" id="GO:0005525">
    <property type="term" value="F:GTP binding"/>
    <property type="evidence" value="ECO:0007669"/>
    <property type="project" value="UniProtKB-UniRule"/>
</dbReference>
<dbReference type="GO" id="GO:0003924">
    <property type="term" value="F:GTPase activity"/>
    <property type="evidence" value="ECO:0007669"/>
    <property type="project" value="InterPro"/>
</dbReference>
<dbReference type="GO" id="GO:0003746">
    <property type="term" value="F:translation elongation factor activity"/>
    <property type="evidence" value="ECO:0007669"/>
    <property type="project" value="UniProtKB-UniRule"/>
</dbReference>
<dbReference type="GO" id="GO:0032790">
    <property type="term" value="P:ribosome disassembly"/>
    <property type="evidence" value="ECO:0007669"/>
    <property type="project" value="TreeGrafter"/>
</dbReference>
<dbReference type="CDD" id="cd01886">
    <property type="entry name" value="EF-G"/>
    <property type="match status" value="1"/>
</dbReference>
<dbReference type="CDD" id="cd16262">
    <property type="entry name" value="EFG_III"/>
    <property type="match status" value="1"/>
</dbReference>
<dbReference type="CDD" id="cd01434">
    <property type="entry name" value="EFG_mtEFG1_IV"/>
    <property type="match status" value="1"/>
</dbReference>
<dbReference type="CDD" id="cd03713">
    <property type="entry name" value="EFG_mtEFG_C"/>
    <property type="match status" value="1"/>
</dbReference>
<dbReference type="CDD" id="cd04088">
    <property type="entry name" value="EFG_mtEFG_II"/>
    <property type="match status" value="1"/>
</dbReference>
<dbReference type="FunFam" id="2.40.30.10:FF:000006">
    <property type="entry name" value="Elongation factor G"/>
    <property type="match status" value="1"/>
</dbReference>
<dbReference type="FunFam" id="3.30.230.10:FF:000003">
    <property type="entry name" value="Elongation factor G"/>
    <property type="match status" value="1"/>
</dbReference>
<dbReference type="FunFam" id="3.30.70.240:FF:000001">
    <property type="entry name" value="Elongation factor G"/>
    <property type="match status" value="1"/>
</dbReference>
<dbReference type="FunFam" id="3.30.70.870:FF:000001">
    <property type="entry name" value="Elongation factor G"/>
    <property type="match status" value="1"/>
</dbReference>
<dbReference type="FunFam" id="3.40.50.300:FF:000029">
    <property type="entry name" value="Elongation factor G"/>
    <property type="match status" value="1"/>
</dbReference>
<dbReference type="Gene3D" id="3.30.230.10">
    <property type="match status" value="1"/>
</dbReference>
<dbReference type="Gene3D" id="3.30.70.240">
    <property type="match status" value="1"/>
</dbReference>
<dbReference type="Gene3D" id="3.30.70.870">
    <property type="entry name" value="Elongation Factor G (Translational Gtpase), domain 3"/>
    <property type="match status" value="1"/>
</dbReference>
<dbReference type="Gene3D" id="3.40.50.300">
    <property type="entry name" value="P-loop containing nucleotide triphosphate hydrolases"/>
    <property type="match status" value="1"/>
</dbReference>
<dbReference type="Gene3D" id="2.40.30.10">
    <property type="entry name" value="Translation factors"/>
    <property type="match status" value="1"/>
</dbReference>
<dbReference type="HAMAP" id="MF_00054_B">
    <property type="entry name" value="EF_G_EF_2_B"/>
    <property type="match status" value="1"/>
</dbReference>
<dbReference type="InterPro" id="IPR053905">
    <property type="entry name" value="EF-G-like_DII"/>
</dbReference>
<dbReference type="InterPro" id="IPR041095">
    <property type="entry name" value="EFG_II"/>
</dbReference>
<dbReference type="InterPro" id="IPR009022">
    <property type="entry name" value="EFG_III"/>
</dbReference>
<dbReference type="InterPro" id="IPR035647">
    <property type="entry name" value="EFG_III/V"/>
</dbReference>
<dbReference type="InterPro" id="IPR047872">
    <property type="entry name" value="EFG_IV"/>
</dbReference>
<dbReference type="InterPro" id="IPR035649">
    <property type="entry name" value="EFG_V"/>
</dbReference>
<dbReference type="InterPro" id="IPR000640">
    <property type="entry name" value="EFG_V-like"/>
</dbReference>
<dbReference type="InterPro" id="IPR031157">
    <property type="entry name" value="G_TR_CS"/>
</dbReference>
<dbReference type="InterPro" id="IPR027417">
    <property type="entry name" value="P-loop_NTPase"/>
</dbReference>
<dbReference type="InterPro" id="IPR020568">
    <property type="entry name" value="Ribosomal_Su5_D2-typ_SF"/>
</dbReference>
<dbReference type="InterPro" id="IPR014721">
    <property type="entry name" value="Ribsml_uS5_D2-typ_fold_subgr"/>
</dbReference>
<dbReference type="InterPro" id="IPR005225">
    <property type="entry name" value="Small_GTP-bd"/>
</dbReference>
<dbReference type="InterPro" id="IPR000795">
    <property type="entry name" value="T_Tr_GTP-bd_dom"/>
</dbReference>
<dbReference type="InterPro" id="IPR009000">
    <property type="entry name" value="Transl_B-barrel_sf"/>
</dbReference>
<dbReference type="InterPro" id="IPR004540">
    <property type="entry name" value="Transl_elong_EFG/EF2"/>
</dbReference>
<dbReference type="InterPro" id="IPR005517">
    <property type="entry name" value="Transl_elong_EFG/EF2_IV"/>
</dbReference>
<dbReference type="NCBIfam" id="TIGR00484">
    <property type="entry name" value="EF-G"/>
    <property type="match status" value="1"/>
</dbReference>
<dbReference type="NCBIfam" id="NF009379">
    <property type="entry name" value="PRK12740.1-3"/>
    <property type="match status" value="1"/>
</dbReference>
<dbReference type="NCBIfam" id="NF009381">
    <property type="entry name" value="PRK12740.1-5"/>
    <property type="match status" value="1"/>
</dbReference>
<dbReference type="NCBIfam" id="TIGR00231">
    <property type="entry name" value="small_GTP"/>
    <property type="match status" value="1"/>
</dbReference>
<dbReference type="PANTHER" id="PTHR43261:SF1">
    <property type="entry name" value="RIBOSOME-RELEASING FACTOR 2, MITOCHONDRIAL"/>
    <property type="match status" value="1"/>
</dbReference>
<dbReference type="PANTHER" id="PTHR43261">
    <property type="entry name" value="TRANSLATION ELONGATION FACTOR G-RELATED"/>
    <property type="match status" value="1"/>
</dbReference>
<dbReference type="Pfam" id="PF22042">
    <property type="entry name" value="EF-G_D2"/>
    <property type="match status" value="1"/>
</dbReference>
<dbReference type="Pfam" id="PF00679">
    <property type="entry name" value="EFG_C"/>
    <property type="match status" value="1"/>
</dbReference>
<dbReference type="Pfam" id="PF14492">
    <property type="entry name" value="EFG_III"/>
    <property type="match status" value="1"/>
</dbReference>
<dbReference type="Pfam" id="PF03764">
    <property type="entry name" value="EFG_IV"/>
    <property type="match status" value="1"/>
</dbReference>
<dbReference type="Pfam" id="PF00009">
    <property type="entry name" value="GTP_EFTU"/>
    <property type="match status" value="1"/>
</dbReference>
<dbReference type="PRINTS" id="PR00315">
    <property type="entry name" value="ELONGATNFCT"/>
</dbReference>
<dbReference type="SMART" id="SM00838">
    <property type="entry name" value="EFG_C"/>
    <property type="match status" value="1"/>
</dbReference>
<dbReference type="SMART" id="SM00889">
    <property type="entry name" value="EFG_IV"/>
    <property type="match status" value="1"/>
</dbReference>
<dbReference type="SUPFAM" id="SSF54980">
    <property type="entry name" value="EF-G C-terminal domain-like"/>
    <property type="match status" value="2"/>
</dbReference>
<dbReference type="SUPFAM" id="SSF52540">
    <property type="entry name" value="P-loop containing nucleoside triphosphate hydrolases"/>
    <property type="match status" value="1"/>
</dbReference>
<dbReference type="SUPFAM" id="SSF54211">
    <property type="entry name" value="Ribosomal protein S5 domain 2-like"/>
    <property type="match status" value="1"/>
</dbReference>
<dbReference type="SUPFAM" id="SSF50447">
    <property type="entry name" value="Translation proteins"/>
    <property type="match status" value="1"/>
</dbReference>
<dbReference type="PROSITE" id="PS00301">
    <property type="entry name" value="G_TR_1"/>
    <property type="match status" value="1"/>
</dbReference>
<dbReference type="PROSITE" id="PS51722">
    <property type="entry name" value="G_TR_2"/>
    <property type="match status" value="1"/>
</dbReference>
<evidence type="ECO:0000255" key="1">
    <source>
        <dbReference type="HAMAP-Rule" id="MF_00054"/>
    </source>
</evidence>
<keyword id="KW-0963">Cytoplasm</keyword>
<keyword id="KW-0251">Elongation factor</keyword>
<keyword id="KW-0342">GTP-binding</keyword>
<keyword id="KW-0547">Nucleotide-binding</keyword>
<keyword id="KW-0648">Protein biosynthesis</keyword>
<keyword id="KW-1185">Reference proteome</keyword>
<accession>Q1AU26</accession>
<protein>
    <recommendedName>
        <fullName evidence="1">Elongation factor G</fullName>
        <shortName evidence="1">EF-G</shortName>
    </recommendedName>
</protein>
<reference key="1">
    <citation type="submission" date="2006-06" db="EMBL/GenBank/DDBJ databases">
        <title>Complete sequence of Rubrobacter xylanophilus DSM 9941.</title>
        <authorList>
            <consortium name="US DOE Joint Genome Institute"/>
            <person name="Copeland A."/>
            <person name="Lucas S."/>
            <person name="Lapidus A."/>
            <person name="Barry K."/>
            <person name="Detter J.C."/>
            <person name="Glavina del Rio T."/>
            <person name="Hammon N."/>
            <person name="Israni S."/>
            <person name="Dalin E."/>
            <person name="Tice H."/>
            <person name="Pitluck S."/>
            <person name="Munk A.C."/>
            <person name="Brettin T."/>
            <person name="Bruce D."/>
            <person name="Han C."/>
            <person name="Tapia R."/>
            <person name="Gilna P."/>
            <person name="Schmutz J."/>
            <person name="Larimer F."/>
            <person name="Land M."/>
            <person name="Hauser L."/>
            <person name="Kyrpides N."/>
            <person name="Lykidis A."/>
            <person name="da Costa M.S."/>
            <person name="Rainey F.A."/>
            <person name="Empadinhas N."/>
            <person name="Jolivet E."/>
            <person name="Battista J.R."/>
            <person name="Richardson P."/>
        </authorList>
    </citation>
    <scope>NUCLEOTIDE SEQUENCE [LARGE SCALE GENOMIC DNA]</scope>
    <source>
        <strain>DSM 9941 / JCM 11954 / NBRC 16129 / PRD-1</strain>
    </source>
</reference>
<name>EFG_RUBXD</name>